<organism>
    <name type="scientific">Mus musculus</name>
    <name type="common">Mouse</name>
    <dbReference type="NCBI Taxonomy" id="10090"/>
    <lineage>
        <taxon>Eukaryota</taxon>
        <taxon>Metazoa</taxon>
        <taxon>Chordata</taxon>
        <taxon>Craniata</taxon>
        <taxon>Vertebrata</taxon>
        <taxon>Euteleostomi</taxon>
        <taxon>Mammalia</taxon>
        <taxon>Eutheria</taxon>
        <taxon>Euarchontoglires</taxon>
        <taxon>Glires</taxon>
        <taxon>Rodentia</taxon>
        <taxon>Myomorpha</taxon>
        <taxon>Muroidea</taxon>
        <taxon>Muridae</taxon>
        <taxon>Murinae</taxon>
        <taxon>Mus</taxon>
        <taxon>Mus</taxon>
    </lineage>
</organism>
<comment type="function">
    <text evidence="1">Could play a role in neuronal development.</text>
</comment>
<comment type="subunit">
    <text evidence="2">Interacts with ASCC1; ASCC2 and TRIP4.</text>
</comment>
<comment type="subcellular location">
    <subcellularLocation>
        <location evidence="2">Nucleus</location>
    </subcellularLocation>
</comment>
<evidence type="ECO:0000250" key="1"/>
<evidence type="ECO:0000250" key="2">
    <source>
        <dbReference type="UniProtKB" id="P21291"/>
    </source>
</evidence>
<evidence type="ECO:0000250" key="3">
    <source>
        <dbReference type="UniProtKB" id="P47875"/>
    </source>
</evidence>
<evidence type="ECO:0000255" key="4"/>
<evidence type="ECO:0000255" key="5">
    <source>
        <dbReference type="PROSITE-ProRule" id="PRU00125"/>
    </source>
</evidence>
<evidence type="ECO:0007744" key="6">
    <source>
    </source>
</evidence>
<evidence type="ECO:0007744" key="7">
    <source>
    </source>
</evidence>
<gene>
    <name type="primary">Csrp1</name>
    <name type="synonym">Crp1</name>
    <name type="synonym">Csrp</name>
</gene>
<keyword id="KW-0007">Acetylation</keyword>
<keyword id="KW-0903">Direct protein sequencing</keyword>
<keyword id="KW-1017">Isopeptide bond</keyword>
<keyword id="KW-0440">LIM domain</keyword>
<keyword id="KW-0479">Metal-binding</keyword>
<keyword id="KW-0539">Nucleus</keyword>
<keyword id="KW-0597">Phosphoprotein</keyword>
<keyword id="KW-1185">Reference proteome</keyword>
<keyword id="KW-0677">Repeat</keyword>
<keyword id="KW-0832">Ubl conjugation</keyword>
<keyword id="KW-0862">Zinc</keyword>
<accession>P97315</accession>
<protein>
    <recommendedName>
        <fullName>Cysteine and glycine-rich protein 1</fullName>
    </recommendedName>
    <alternativeName>
        <fullName>Cysteine-rich protein 1</fullName>
        <shortName>CRP</shortName>
        <shortName>CRP1</shortName>
    </alternativeName>
</protein>
<name>CSRP1_MOUSE</name>
<feature type="chain" id="PRO_0000075716" description="Cysteine and glycine-rich protein 1">
    <location>
        <begin position="1"/>
        <end position="193"/>
    </location>
</feature>
<feature type="domain" description="LIM zinc-binding 1" evidence="5">
    <location>
        <begin position="10"/>
        <end position="61"/>
    </location>
</feature>
<feature type="domain" description="LIM zinc-binding 2" evidence="5">
    <location>
        <begin position="119"/>
        <end position="170"/>
    </location>
</feature>
<feature type="short sequence motif" description="Nuclear localization signal" evidence="4">
    <location>
        <begin position="64"/>
        <end position="69"/>
    </location>
</feature>
<feature type="modified residue" description="Phosphoserine" evidence="3">
    <location>
        <position position="81"/>
    </location>
</feature>
<feature type="modified residue" description="N6-acetyllysine" evidence="7">
    <location>
        <position position="84"/>
    </location>
</feature>
<feature type="modified residue" description="N6-acetyllysine" evidence="7">
    <location>
        <position position="112"/>
    </location>
</feature>
<feature type="modified residue" description="N6-acetyllysine" evidence="7">
    <location>
        <position position="131"/>
    </location>
</feature>
<feature type="modified residue" description="N6-acetyllysine" evidence="7">
    <location>
        <position position="137"/>
    </location>
</feature>
<feature type="modified residue" description="N6-acetyllysine" evidence="7">
    <location>
        <position position="161"/>
    </location>
</feature>
<feature type="modified residue" description="Phosphoserine" evidence="6">
    <location>
        <position position="192"/>
    </location>
</feature>
<feature type="cross-link" description="Glycyl lysine isopeptide (Lys-Gly) (interchain with G-Cter in SUMO2)" evidence="2">
    <location>
        <position position="91"/>
    </location>
</feature>
<proteinExistence type="evidence at protein level"/>
<reference key="1">
    <citation type="submission" date="1996-11" db="EMBL/GenBank/DDBJ databases">
        <title>Differential expression of three double LIM proteins during the skeletal muscle terminal differentiation.</title>
        <authorList>
            <person name="Hashimoto N."/>
            <person name="Ogashiwa M."/>
        </authorList>
    </citation>
    <scope>NUCLEOTIDE SEQUENCE [MRNA]</scope>
    <source>
        <strain>C3H/HeJ</strain>
    </source>
</reference>
<reference key="2">
    <citation type="journal article" date="1999" name="Dev. Dyn.">
        <title>The LIM protein, CRP1, is a smooth muscle marker.</title>
        <authorList>
            <person name="Henderson J.R."/>
            <person name="Macalma T."/>
            <person name="Brown D."/>
            <person name="Richardson J.A."/>
            <person name="Olson E.N."/>
            <person name="Beckerle M.C."/>
        </authorList>
    </citation>
    <scope>NUCLEOTIDE SEQUENCE [MRNA]</scope>
</reference>
<reference key="3">
    <citation type="journal article" date="2005" name="Science">
        <title>The transcriptional landscape of the mammalian genome.</title>
        <authorList>
            <person name="Carninci P."/>
            <person name="Kasukawa T."/>
            <person name="Katayama S."/>
            <person name="Gough J."/>
            <person name="Frith M.C."/>
            <person name="Maeda N."/>
            <person name="Oyama R."/>
            <person name="Ravasi T."/>
            <person name="Lenhard B."/>
            <person name="Wells C."/>
            <person name="Kodzius R."/>
            <person name="Shimokawa K."/>
            <person name="Bajic V.B."/>
            <person name="Brenner S.E."/>
            <person name="Batalov S."/>
            <person name="Forrest A.R."/>
            <person name="Zavolan M."/>
            <person name="Davis M.J."/>
            <person name="Wilming L.G."/>
            <person name="Aidinis V."/>
            <person name="Allen J.E."/>
            <person name="Ambesi-Impiombato A."/>
            <person name="Apweiler R."/>
            <person name="Aturaliya R.N."/>
            <person name="Bailey T.L."/>
            <person name="Bansal M."/>
            <person name="Baxter L."/>
            <person name="Beisel K.W."/>
            <person name="Bersano T."/>
            <person name="Bono H."/>
            <person name="Chalk A.M."/>
            <person name="Chiu K.P."/>
            <person name="Choudhary V."/>
            <person name="Christoffels A."/>
            <person name="Clutterbuck D.R."/>
            <person name="Crowe M.L."/>
            <person name="Dalla E."/>
            <person name="Dalrymple B.P."/>
            <person name="de Bono B."/>
            <person name="Della Gatta G."/>
            <person name="di Bernardo D."/>
            <person name="Down T."/>
            <person name="Engstrom P."/>
            <person name="Fagiolini M."/>
            <person name="Faulkner G."/>
            <person name="Fletcher C.F."/>
            <person name="Fukushima T."/>
            <person name="Furuno M."/>
            <person name="Futaki S."/>
            <person name="Gariboldi M."/>
            <person name="Georgii-Hemming P."/>
            <person name="Gingeras T.R."/>
            <person name="Gojobori T."/>
            <person name="Green R.E."/>
            <person name="Gustincich S."/>
            <person name="Harbers M."/>
            <person name="Hayashi Y."/>
            <person name="Hensch T.K."/>
            <person name="Hirokawa N."/>
            <person name="Hill D."/>
            <person name="Huminiecki L."/>
            <person name="Iacono M."/>
            <person name="Ikeo K."/>
            <person name="Iwama A."/>
            <person name="Ishikawa T."/>
            <person name="Jakt M."/>
            <person name="Kanapin A."/>
            <person name="Katoh M."/>
            <person name="Kawasawa Y."/>
            <person name="Kelso J."/>
            <person name="Kitamura H."/>
            <person name="Kitano H."/>
            <person name="Kollias G."/>
            <person name="Krishnan S.P."/>
            <person name="Kruger A."/>
            <person name="Kummerfeld S.K."/>
            <person name="Kurochkin I.V."/>
            <person name="Lareau L.F."/>
            <person name="Lazarevic D."/>
            <person name="Lipovich L."/>
            <person name="Liu J."/>
            <person name="Liuni S."/>
            <person name="McWilliam S."/>
            <person name="Madan Babu M."/>
            <person name="Madera M."/>
            <person name="Marchionni L."/>
            <person name="Matsuda H."/>
            <person name="Matsuzawa S."/>
            <person name="Miki H."/>
            <person name="Mignone F."/>
            <person name="Miyake S."/>
            <person name="Morris K."/>
            <person name="Mottagui-Tabar S."/>
            <person name="Mulder N."/>
            <person name="Nakano N."/>
            <person name="Nakauchi H."/>
            <person name="Ng P."/>
            <person name="Nilsson R."/>
            <person name="Nishiguchi S."/>
            <person name="Nishikawa S."/>
            <person name="Nori F."/>
            <person name="Ohara O."/>
            <person name="Okazaki Y."/>
            <person name="Orlando V."/>
            <person name="Pang K.C."/>
            <person name="Pavan W.J."/>
            <person name="Pavesi G."/>
            <person name="Pesole G."/>
            <person name="Petrovsky N."/>
            <person name="Piazza S."/>
            <person name="Reed J."/>
            <person name="Reid J.F."/>
            <person name="Ring B.Z."/>
            <person name="Ringwald M."/>
            <person name="Rost B."/>
            <person name="Ruan Y."/>
            <person name="Salzberg S.L."/>
            <person name="Sandelin A."/>
            <person name="Schneider C."/>
            <person name="Schoenbach C."/>
            <person name="Sekiguchi K."/>
            <person name="Semple C.A."/>
            <person name="Seno S."/>
            <person name="Sessa L."/>
            <person name="Sheng Y."/>
            <person name="Shibata Y."/>
            <person name="Shimada H."/>
            <person name="Shimada K."/>
            <person name="Silva D."/>
            <person name="Sinclair B."/>
            <person name="Sperling S."/>
            <person name="Stupka E."/>
            <person name="Sugiura K."/>
            <person name="Sultana R."/>
            <person name="Takenaka Y."/>
            <person name="Taki K."/>
            <person name="Tammoja K."/>
            <person name="Tan S.L."/>
            <person name="Tang S."/>
            <person name="Taylor M.S."/>
            <person name="Tegner J."/>
            <person name="Teichmann S.A."/>
            <person name="Ueda H.R."/>
            <person name="van Nimwegen E."/>
            <person name="Verardo R."/>
            <person name="Wei C.L."/>
            <person name="Yagi K."/>
            <person name="Yamanishi H."/>
            <person name="Zabarovsky E."/>
            <person name="Zhu S."/>
            <person name="Zimmer A."/>
            <person name="Hide W."/>
            <person name="Bult C."/>
            <person name="Grimmond S.M."/>
            <person name="Teasdale R.D."/>
            <person name="Liu E.T."/>
            <person name="Brusic V."/>
            <person name="Quackenbush J."/>
            <person name="Wahlestedt C."/>
            <person name="Mattick J.S."/>
            <person name="Hume D.A."/>
            <person name="Kai C."/>
            <person name="Sasaki D."/>
            <person name="Tomaru Y."/>
            <person name="Fukuda S."/>
            <person name="Kanamori-Katayama M."/>
            <person name="Suzuki M."/>
            <person name="Aoki J."/>
            <person name="Arakawa T."/>
            <person name="Iida J."/>
            <person name="Imamura K."/>
            <person name="Itoh M."/>
            <person name="Kato T."/>
            <person name="Kawaji H."/>
            <person name="Kawagashira N."/>
            <person name="Kawashima T."/>
            <person name="Kojima M."/>
            <person name="Kondo S."/>
            <person name="Konno H."/>
            <person name="Nakano K."/>
            <person name="Ninomiya N."/>
            <person name="Nishio T."/>
            <person name="Okada M."/>
            <person name="Plessy C."/>
            <person name="Shibata K."/>
            <person name="Shiraki T."/>
            <person name="Suzuki S."/>
            <person name="Tagami M."/>
            <person name="Waki K."/>
            <person name="Watahiki A."/>
            <person name="Okamura-Oho Y."/>
            <person name="Suzuki H."/>
            <person name="Kawai J."/>
            <person name="Hayashizaki Y."/>
        </authorList>
    </citation>
    <scope>NUCLEOTIDE SEQUENCE [LARGE SCALE MRNA]</scope>
    <source>
        <strain>C57BL/6J</strain>
        <tissue>Eye</tissue>
        <tissue>Thymus</tissue>
    </source>
</reference>
<reference key="4">
    <citation type="journal article" date="2004" name="Genome Res.">
        <title>The status, quality, and expansion of the NIH full-length cDNA project: the Mammalian Gene Collection (MGC).</title>
        <authorList>
            <consortium name="The MGC Project Team"/>
        </authorList>
    </citation>
    <scope>NUCLEOTIDE SEQUENCE [LARGE SCALE MRNA]</scope>
    <source>
        <tissue>Mammary tumor</tissue>
    </source>
</reference>
<reference key="5">
    <citation type="submission" date="2007-04" db="UniProtKB">
        <authorList>
            <person name="Lubec G."/>
            <person name="Kang S.U."/>
        </authorList>
    </citation>
    <scope>PROTEIN SEQUENCE OF 122-131</scope>
    <scope>IDENTIFICATION BY MASS SPECTROMETRY</scope>
    <source>
        <strain>C57BL/6J</strain>
        <tissue>Brain</tissue>
    </source>
</reference>
<reference key="6">
    <citation type="journal article" date="2007" name="Mol. Cell. Proteomics">
        <title>Qualitative and quantitative analyses of protein phosphorylation in naive and stimulated mouse synaptosomal preparations.</title>
        <authorList>
            <person name="Munton R.P."/>
            <person name="Tweedie-Cullen R."/>
            <person name="Livingstone-Zatchej M."/>
            <person name="Weinandy F."/>
            <person name="Waidelich M."/>
            <person name="Longo D."/>
            <person name="Gehrig P."/>
            <person name="Potthast F."/>
            <person name="Rutishauser D."/>
            <person name="Gerrits B."/>
            <person name="Panse C."/>
            <person name="Schlapbach R."/>
            <person name="Mansuy I.M."/>
        </authorList>
    </citation>
    <scope>IDENTIFICATION BY MASS SPECTROMETRY [LARGE SCALE ANALYSIS]</scope>
    <source>
        <tissue>Brain cortex</tissue>
    </source>
</reference>
<reference key="7">
    <citation type="journal article" date="2010" name="Cell">
        <title>A tissue-specific atlas of mouse protein phosphorylation and expression.</title>
        <authorList>
            <person name="Huttlin E.L."/>
            <person name="Jedrychowski M.P."/>
            <person name="Elias J.E."/>
            <person name="Goswami T."/>
            <person name="Rad R."/>
            <person name="Beausoleil S.A."/>
            <person name="Villen J."/>
            <person name="Haas W."/>
            <person name="Sowa M.E."/>
            <person name="Gygi S.P."/>
        </authorList>
    </citation>
    <scope>PHOSPHORYLATION [LARGE SCALE ANALYSIS] AT SER-192</scope>
    <scope>IDENTIFICATION BY MASS SPECTROMETRY [LARGE SCALE ANALYSIS]</scope>
    <source>
        <tissue>Brain</tissue>
        <tissue>Brown adipose tissue</tissue>
        <tissue>Heart</tissue>
        <tissue>Kidney</tissue>
        <tissue>Liver</tissue>
        <tissue>Lung</tissue>
        <tissue>Pancreas</tissue>
        <tissue>Spleen</tissue>
        <tissue>Testis</tissue>
    </source>
</reference>
<reference key="8">
    <citation type="journal article" date="2013" name="Mol. Cell">
        <title>SIRT5-mediated lysine desuccinylation impacts diverse metabolic pathways.</title>
        <authorList>
            <person name="Park J."/>
            <person name="Chen Y."/>
            <person name="Tishkoff D.X."/>
            <person name="Peng C."/>
            <person name="Tan M."/>
            <person name="Dai L."/>
            <person name="Xie Z."/>
            <person name="Zhang Y."/>
            <person name="Zwaans B.M."/>
            <person name="Skinner M.E."/>
            <person name="Lombard D.B."/>
            <person name="Zhao Y."/>
        </authorList>
    </citation>
    <scope>ACETYLATION [LARGE SCALE ANALYSIS] AT LYS-84; LYS-112; LYS-131; LYS-137 AND LYS-161</scope>
    <scope>IDENTIFICATION BY MASS SPECTROMETRY [LARGE SCALE ANALYSIS]</scope>
    <source>
        <tissue>Embryonic fibroblast</tissue>
    </source>
</reference>
<dbReference type="EMBL" id="D88793">
    <property type="protein sequence ID" value="BAA13723.1"/>
    <property type="molecule type" value="mRNA"/>
</dbReference>
<dbReference type="EMBL" id="AF092921">
    <property type="protein sequence ID" value="AAD19352.1"/>
    <property type="molecule type" value="mRNA"/>
</dbReference>
<dbReference type="EMBL" id="AK077787">
    <property type="protein sequence ID" value="BAC37009.1"/>
    <property type="molecule type" value="mRNA"/>
</dbReference>
<dbReference type="EMBL" id="AK087436">
    <property type="protein sequence ID" value="BAC39873.1"/>
    <property type="molecule type" value="mRNA"/>
</dbReference>
<dbReference type="EMBL" id="BC006912">
    <property type="protein sequence ID" value="AAH06912.1"/>
    <property type="molecule type" value="mRNA"/>
</dbReference>
<dbReference type="CCDS" id="CCDS15320.1"/>
<dbReference type="RefSeq" id="NP_001347711.1">
    <property type="nucleotide sequence ID" value="NM_001360782.2"/>
</dbReference>
<dbReference type="RefSeq" id="NP_001407015.1">
    <property type="nucleotide sequence ID" value="NM_001420086.1"/>
</dbReference>
<dbReference type="RefSeq" id="NP_001407016.1">
    <property type="nucleotide sequence ID" value="NM_001420087.1"/>
</dbReference>
<dbReference type="RefSeq" id="NP_001407017.1">
    <property type="nucleotide sequence ID" value="NM_001420088.1"/>
</dbReference>
<dbReference type="RefSeq" id="NP_001407018.1">
    <property type="nucleotide sequence ID" value="NM_001420089.1"/>
</dbReference>
<dbReference type="RefSeq" id="NP_031817.1">
    <property type="nucleotide sequence ID" value="NM_007791.7"/>
</dbReference>
<dbReference type="SMR" id="P97315"/>
<dbReference type="BioGRID" id="198952">
    <property type="interactions" value="7"/>
</dbReference>
<dbReference type="FunCoup" id="P97315">
    <property type="interactions" value="1252"/>
</dbReference>
<dbReference type="IntAct" id="P97315">
    <property type="interactions" value="2"/>
</dbReference>
<dbReference type="STRING" id="10090.ENSMUSP00000095169"/>
<dbReference type="GlyGen" id="P97315">
    <property type="glycosylation" value="3 sites, 1 N-linked glycan (1 site), 1 O-linked glycan (2 sites)"/>
</dbReference>
<dbReference type="iPTMnet" id="P97315"/>
<dbReference type="PhosphoSitePlus" id="P97315"/>
<dbReference type="SwissPalm" id="P97315"/>
<dbReference type="CPTAC" id="non-CPTAC-4028"/>
<dbReference type="jPOST" id="P97315"/>
<dbReference type="PaxDb" id="10090-ENSMUSP00000027677"/>
<dbReference type="PeptideAtlas" id="P97315"/>
<dbReference type="ProteomicsDB" id="285212"/>
<dbReference type="Pumba" id="P97315"/>
<dbReference type="Antibodypedia" id="20644">
    <property type="antibodies" value="298 antibodies from 31 providers"/>
</dbReference>
<dbReference type="DNASU" id="13007"/>
<dbReference type="Ensembl" id="ENSMUST00000027677.8">
    <property type="protein sequence ID" value="ENSMUSP00000027677.8"/>
    <property type="gene ID" value="ENSMUSG00000026421.15"/>
</dbReference>
<dbReference type="Ensembl" id="ENSMUST00000097561.9">
    <property type="protein sequence ID" value="ENSMUSP00000095169.3"/>
    <property type="gene ID" value="ENSMUSG00000026421.15"/>
</dbReference>
<dbReference type="GeneID" id="13007"/>
<dbReference type="KEGG" id="mmu:13007"/>
<dbReference type="UCSC" id="uc007cto.1">
    <property type="organism name" value="mouse"/>
</dbReference>
<dbReference type="AGR" id="MGI:88549"/>
<dbReference type="CTD" id="1465"/>
<dbReference type="MGI" id="MGI:88549">
    <property type="gene designation" value="Csrp1"/>
</dbReference>
<dbReference type="VEuPathDB" id="HostDB:ENSMUSG00000026421"/>
<dbReference type="eggNOG" id="KOG1700">
    <property type="taxonomic scope" value="Eukaryota"/>
</dbReference>
<dbReference type="GeneTree" id="ENSGT00940000156777"/>
<dbReference type="HOGENOM" id="CLU_054591_1_0_1"/>
<dbReference type="InParanoid" id="P97315"/>
<dbReference type="OMA" id="NYVAHEQ"/>
<dbReference type="OrthoDB" id="8062037at2759"/>
<dbReference type="PhylomeDB" id="P97315"/>
<dbReference type="TreeFam" id="TF313758"/>
<dbReference type="BioGRID-ORCS" id="13007">
    <property type="hits" value="1 hit in 79 CRISPR screens"/>
</dbReference>
<dbReference type="ChiTaRS" id="Csrp1">
    <property type="organism name" value="mouse"/>
</dbReference>
<dbReference type="PRO" id="PR:P97315"/>
<dbReference type="Proteomes" id="UP000000589">
    <property type="component" value="Chromosome 1"/>
</dbReference>
<dbReference type="RNAct" id="P97315">
    <property type="molecule type" value="protein"/>
</dbReference>
<dbReference type="Bgee" id="ENSMUSG00000026421">
    <property type="expression patterns" value="Expressed in ascending aorta and 315 other cell types or tissues"/>
</dbReference>
<dbReference type="ExpressionAtlas" id="P97315">
    <property type="expression patterns" value="baseline and differential"/>
</dbReference>
<dbReference type="GO" id="GO:0015629">
    <property type="term" value="C:actin cytoskeleton"/>
    <property type="evidence" value="ECO:0000304"/>
    <property type="project" value="MGI"/>
</dbReference>
<dbReference type="GO" id="GO:0005654">
    <property type="term" value="C:nucleoplasm"/>
    <property type="evidence" value="ECO:0000304"/>
    <property type="project" value="Reactome"/>
</dbReference>
<dbReference type="GO" id="GO:0046872">
    <property type="term" value="F:metal ion binding"/>
    <property type="evidence" value="ECO:0007669"/>
    <property type="project" value="UniProtKB-KW"/>
</dbReference>
<dbReference type="GO" id="GO:0030036">
    <property type="term" value="P:actin cytoskeleton organization"/>
    <property type="evidence" value="ECO:0000304"/>
    <property type="project" value="MGI"/>
</dbReference>
<dbReference type="CDD" id="cd09479">
    <property type="entry name" value="LIM1_CRP1"/>
    <property type="match status" value="1"/>
</dbReference>
<dbReference type="CDD" id="cd09403">
    <property type="entry name" value="LIM2_CRP"/>
    <property type="match status" value="1"/>
</dbReference>
<dbReference type="FunFam" id="2.10.110.10:FF:000001">
    <property type="entry name" value="Cysteine and glycine-rich protein 1"/>
    <property type="match status" value="1"/>
</dbReference>
<dbReference type="FunFam" id="2.10.110.10:FF:000124">
    <property type="entry name" value="Cysteine and glycine-rich protein 1a"/>
    <property type="match status" value="1"/>
</dbReference>
<dbReference type="Gene3D" id="2.10.110.10">
    <property type="entry name" value="Cysteine Rich Protein"/>
    <property type="match status" value="2"/>
</dbReference>
<dbReference type="InterPro" id="IPR001781">
    <property type="entry name" value="Znf_LIM"/>
</dbReference>
<dbReference type="PANTHER" id="PTHR24215:SF23">
    <property type="entry name" value="CYSTEINE AND GLYCINE-RICH PROTEIN 1"/>
    <property type="match status" value="1"/>
</dbReference>
<dbReference type="PANTHER" id="PTHR24215">
    <property type="entry name" value="RHO-GTPASE-ACTIVATING PROTEIN LRG1"/>
    <property type="match status" value="1"/>
</dbReference>
<dbReference type="Pfam" id="PF00412">
    <property type="entry name" value="LIM"/>
    <property type="match status" value="2"/>
</dbReference>
<dbReference type="SMART" id="SM00132">
    <property type="entry name" value="LIM"/>
    <property type="match status" value="2"/>
</dbReference>
<dbReference type="SUPFAM" id="SSF57716">
    <property type="entry name" value="Glucocorticoid receptor-like (DNA-binding domain)"/>
    <property type="match status" value="4"/>
</dbReference>
<dbReference type="PROSITE" id="PS00478">
    <property type="entry name" value="LIM_DOMAIN_1"/>
    <property type="match status" value="2"/>
</dbReference>
<dbReference type="PROSITE" id="PS50023">
    <property type="entry name" value="LIM_DOMAIN_2"/>
    <property type="match status" value="2"/>
</dbReference>
<sequence>MPNWGGGKKCGVCQKTVYFAEEVQCEGNSFHKSCFLCMVCKKNLDSTTVAVHGEEIYCKSCYGKKYGPKGYGYGQGAGTLSTDKGESLGIKHEEAPGHRPTTNPNASKFAQKIGGSERCPRCSQAVYAAEKVIGAGKSWHKSCFRCAKCGKGLESTTLADKDGEIYCKGCYAKNFGPKGFGFGQGAGALVHSE</sequence>